<keyword id="KW-0131">Cell cycle</keyword>
<keyword id="KW-0132">Cell division</keyword>
<keyword id="KW-0158">Chromosome</keyword>
<keyword id="KW-0963">Cytoplasm</keyword>
<keyword id="KW-0498">Mitosis</keyword>
<keyword id="KW-0539">Nucleus</keyword>
<keyword id="KW-1185">Reference proteome</keyword>
<keyword id="KW-0832">Ubl conjugation</keyword>
<gene>
    <name type="primary">cdca5-b</name>
</gene>
<protein>
    <recommendedName>
        <fullName>Sororin-B</fullName>
    </recommendedName>
    <alternativeName>
        <fullName>Cell division cycle-associated protein 5-B</fullName>
    </alternativeName>
</protein>
<organism>
    <name type="scientific">Xenopus laevis</name>
    <name type="common">African clawed frog</name>
    <dbReference type="NCBI Taxonomy" id="8355"/>
    <lineage>
        <taxon>Eukaryota</taxon>
        <taxon>Metazoa</taxon>
        <taxon>Chordata</taxon>
        <taxon>Craniata</taxon>
        <taxon>Vertebrata</taxon>
        <taxon>Euteleostomi</taxon>
        <taxon>Amphibia</taxon>
        <taxon>Batrachia</taxon>
        <taxon>Anura</taxon>
        <taxon>Pipoidea</taxon>
        <taxon>Pipidae</taxon>
        <taxon>Xenopodinae</taxon>
        <taxon>Xenopus</taxon>
        <taxon>Xenopus</taxon>
    </lineage>
</organism>
<proteinExistence type="evidence at protein level"/>
<sequence length="275" mass="30654">MSERKKRGSSDADSRRGVAIISPPKRRSQRKSASDSPIPAPIMKRSITVKKIMPRKTLAAIANTGSQFTPKVSNVTAAPRRSSRISPKIQKENAFSEQSQMDPKDVTSQSSAPEIDVLSPIPVNIQLSPKLDNRDMIMSQKVRRSYSRLEMSLNSSAFLYSPTRKTDSSDTSTPNAVLKSSRISLFGFDKLLNSEMPEGELKKSSAVTREKTANERNLQTVLPEEPDHNIPGVVLAKQKRRKRKVPVLEKSDVDEWAAIMNAEFDEAEKFDLTVE</sequence>
<comment type="function">
    <text evidence="5">Regulator of sister chromatid cohesion in mitosis stabilizing cohesin complex association with chromatin. May antagonize the action of wapl which stimulates cohesin dissociation from chromatin. Cohesion ensures that chromosome partitioning is accurate in both meiotic and mitotic cells and plays an important role in DNA repair. Required for efficient DNA double-stranded break repair (Probable).</text>
</comment>
<comment type="subunit">
    <text evidence="1 4">Interacts with the APC/C complex (By similarity). Interacts with the chromatin-bound cohesin complex; the interaction is indirect, occurs after DNA replication and requires acetylation of the cohesin component smc3. Interacts (via the FGF motif) with pds5a and pds5b; the interaction is direct and prevents the interaction of pds5a with wapl (Probable).</text>
</comment>
<comment type="subcellular location">
    <subcellularLocation>
        <location evidence="4">Nucleus</location>
    </subcellularLocation>
    <subcellularLocation>
        <location evidence="4">Chromosome</location>
    </subcellularLocation>
    <subcellularLocation>
        <location evidence="4">Cytoplasm</location>
    </subcellularLocation>
    <text evidence="4">Associates with nuclear chromatin from S phase until metaphase and is released in the cytoplasm upon nuclear envelope breakdown.</text>
</comment>
<comment type="domain">
    <text evidence="1">The KEN box is required for the association with the APC/C complex.</text>
</comment>
<comment type="PTM">
    <text evidence="1">Ubiquitinated by the APC/C complex in G1, leading to its degradation.</text>
</comment>
<comment type="similarity">
    <text evidence="4">Belongs to the sororin family.</text>
</comment>
<accession>Q5XG21</accession>
<feature type="chain" id="PRO_0000089391" description="Sororin-B">
    <location>
        <begin position="1"/>
        <end position="275"/>
    </location>
</feature>
<feature type="region of interest" description="Disordered" evidence="3">
    <location>
        <begin position="1"/>
        <end position="42"/>
    </location>
</feature>
<feature type="region of interest" description="Disordered" evidence="3">
    <location>
        <begin position="63"/>
        <end position="117"/>
    </location>
</feature>
<feature type="region of interest" description="C-terminal Sororin domain" evidence="2">
    <location>
        <begin position="253"/>
        <end position="275"/>
    </location>
</feature>
<feature type="short sequence motif" description="KEN box">
    <location>
        <begin position="91"/>
        <end position="93"/>
    </location>
</feature>
<feature type="short sequence motif" description="FGF motif">
    <location>
        <begin position="186"/>
        <end position="188"/>
    </location>
</feature>
<feature type="compositionally biased region" description="Basic and acidic residues" evidence="3">
    <location>
        <begin position="1"/>
        <end position="16"/>
    </location>
</feature>
<feature type="compositionally biased region" description="Polar residues" evidence="3">
    <location>
        <begin position="63"/>
        <end position="76"/>
    </location>
</feature>
<feature type="compositionally biased region" description="Polar residues" evidence="3">
    <location>
        <begin position="93"/>
        <end position="112"/>
    </location>
</feature>
<evidence type="ECO:0000250" key="1"/>
<evidence type="ECO:0000250" key="2">
    <source>
        <dbReference type="UniProtKB" id="O14291"/>
    </source>
</evidence>
<evidence type="ECO:0000256" key="3">
    <source>
        <dbReference type="SAM" id="MobiDB-lite"/>
    </source>
</evidence>
<evidence type="ECO:0000305" key="4"/>
<evidence type="ECO:0000305" key="5">
    <source>
    </source>
</evidence>
<name>CCA5B_XENLA</name>
<reference key="1">
    <citation type="submission" date="2004-10" db="EMBL/GenBank/DDBJ databases">
        <authorList>
            <consortium name="NIH - Xenopus Gene Collection (XGC) project"/>
        </authorList>
    </citation>
    <scope>NUCLEOTIDE SEQUENCE [LARGE SCALE MRNA]</scope>
    <source>
        <tissue>Spleen</tissue>
    </source>
</reference>
<reference key="2">
    <citation type="journal article" date="2010" name="Cell">
        <title>Sororin mediates sister chromatid cohesion by antagonizing wapl.</title>
        <authorList>
            <person name="Nishiyama T."/>
            <person name="Ladurner R."/>
            <person name="Schmitz J."/>
            <person name="Kreidl E."/>
            <person name="Schleiffer A."/>
            <person name="Bhaskara V."/>
            <person name="Bando M."/>
            <person name="Shirahige K."/>
            <person name="Hyman A.A."/>
            <person name="Mechtler K."/>
            <person name="Peters J.M."/>
        </authorList>
    </citation>
    <scope>FUNCTION</scope>
    <scope>INTERACTION WITH PDS5A AND PDS5B</scope>
</reference>
<dbReference type="EMBL" id="BC084650">
    <property type="protein sequence ID" value="AAH84650.1"/>
    <property type="molecule type" value="mRNA"/>
</dbReference>
<dbReference type="RefSeq" id="NP_001088380.1">
    <property type="nucleotide sequence ID" value="NM_001094911.1"/>
</dbReference>
<dbReference type="SMR" id="Q5XG21"/>
<dbReference type="DNASU" id="495231"/>
<dbReference type="GeneID" id="495231"/>
<dbReference type="KEGG" id="xla:495231"/>
<dbReference type="AGR" id="Xenbase:XB-GENE-6254116"/>
<dbReference type="CTD" id="495231"/>
<dbReference type="Xenbase" id="XB-GENE-6254116">
    <property type="gene designation" value="cdca5.L"/>
</dbReference>
<dbReference type="OrthoDB" id="9949198at2759"/>
<dbReference type="Proteomes" id="UP000186698">
    <property type="component" value="Chromosome 4L"/>
</dbReference>
<dbReference type="Bgee" id="495231">
    <property type="expression patterns" value="Expressed in gastrula and 14 other cell types or tissues"/>
</dbReference>
<dbReference type="GO" id="GO:0000785">
    <property type="term" value="C:chromatin"/>
    <property type="evidence" value="ECO:0000250"/>
    <property type="project" value="UniProtKB"/>
</dbReference>
<dbReference type="GO" id="GO:0005737">
    <property type="term" value="C:cytoplasm"/>
    <property type="evidence" value="ECO:0000250"/>
    <property type="project" value="UniProtKB"/>
</dbReference>
<dbReference type="GO" id="GO:0005634">
    <property type="term" value="C:nucleus"/>
    <property type="evidence" value="ECO:0000250"/>
    <property type="project" value="UniProtKB"/>
</dbReference>
<dbReference type="GO" id="GO:0051301">
    <property type="term" value="P:cell division"/>
    <property type="evidence" value="ECO:0007669"/>
    <property type="project" value="UniProtKB-KW"/>
</dbReference>
<dbReference type="GO" id="GO:0006302">
    <property type="term" value="P:double-strand break repair"/>
    <property type="evidence" value="ECO:0000250"/>
    <property type="project" value="UniProtKB"/>
</dbReference>
<dbReference type="GO" id="GO:0007080">
    <property type="term" value="P:mitotic metaphase chromosome alignment"/>
    <property type="evidence" value="ECO:0000318"/>
    <property type="project" value="GO_Central"/>
</dbReference>
<dbReference type="GO" id="GO:0007064">
    <property type="term" value="P:mitotic sister chromatid cohesion"/>
    <property type="evidence" value="ECO:0000250"/>
    <property type="project" value="UniProtKB"/>
</dbReference>
<dbReference type="GO" id="GO:0031536">
    <property type="term" value="P:positive regulation of exit from mitosis"/>
    <property type="evidence" value="ECO:0000318"/>
    <property type="project" value="GO_Central"/>
</dbReference>
<dbReference type="InterPro" id="IPR018605">
    <property type="entry name" value="Sororin"/>
</dbReference>
<dbReference type="PANTHER" id="PTHR31092">
    <property type="entry name" value="SORORIN"/>
    <property type="match status" value="1"/>
</dbReference>
<dbReference type="PANTHER" id="PTHR31092:SF2">
    <property type="entry name" value="SORORIN"/>
    <property type="match status" value="1"/>
</dbReference>
<dbReference type="Pfam" id="PF25220">
    <property type="entry name" value="Sororin_C"/>
    <property type="match status" value="1"/>
</dbReference>
<dbReference type="Pfam" id="PF09666">
    <property type="entry name" value="Sororin_middle"/>
    <property type="match status" value="1"/>
</dbReference>